<sequence>MIQMQTILNVADNSGAKEVMCIKVLGGTHHMIAHLGDVIVVSIKSSIPKGKVKKGEVCKALIIRTKCGVTRHDGSNIKFDSNDVVLLNKQGEPFGTRIFGSVPRELRVKNFSKIVSLAEEVL</sequence>
<dbReference type="EMBL" id="AP008981">
    <property type="protein sequence ID" value="BAG40512.1"/>
    <property type="molecule type" value="Genomic_DNA"/>
</dbReference>
<dbReference type="RefSeq" id="WP_012461615.1">
    <property type="nucleotide sequence ID" value="NC_010793.1"/>
</dbReference>
<dbReference type="SMR" id="B3CT15"/>
<dbReference type="KEGG" id="ott:OTT_1054"/>
<dbReference type="HOGENOM" id="CLU_095071_2_1_5"/>
<dbReference type="OrthoDB" id="9806379at2"/>
<dbReference type="Proteomes" id="UP000001033">
    <property type="component" value="Chromosome"/>
</dbReference>
<dbReference type="GO" id="GO:0022625">
    <property type="term" value="C:cytosolic large ribosomal subunit"/>
    <property type="evidence" value="ECO:0007669"/>
    <property type="project" value="TreeGrafter"/>
</dbReference>
<dbReference type="GO" id="GO:0070180">
    <property type="term" value="F:large ribosomal subunit rRNA binding"/>
    <property type="evidence" value="ECO:0007669"/>
    <property type="project" value="TreeGrafter"/>
</dbReference>
<dbReference type="GO" id="GO:0003735">
    <property type="term" value="F:structural constituent of ribosome"/>
    <property type="evidence" value="ECO:0007669"/>
    <property type="project" value="InterPro"/>
</dbReference>
<dbReference type="GO" id="GO:0006412">
    <property type="term" value="P:translation"/>
    <property type="evidence" value="ECO:0007669"/>
    <property type="project" value="UniProtKB-UniRule"/>
</dbReference>
<dbReference type="CDD" id="cd00337">
    <property type="entry name" value="Ribosomal_uL14"/>
    <property type="match status" value="1"/>
</dbReference>
<dbReference type="Gene3D" id="2.40.150.20">
    <property type="entry name" value="Ribosomal protein L14"/>
    <property type="match status" value="1"/>
</dbReference>
<dbReference type="HAMAP" id="MF_01367">
    <property type="entry name" value="Ribosomal_uL14"/>
    <property type="match status" value="1"/>
</dbReference>
<dbReference type="InterPro" id="IPR000218">
    <property type="entry name" value="Ribosomal_uL14"/>
</dbReference>
<dbReference type="InterPro" id="IPR005745">
    <property type="entry name" value="Ribosomal_uL14_bac-type"/>
</dbReference>
<dbReference type="InterPro" id="IPR019972">
    <property type="entry name" value="Ribosomal_uL14_CS"/>
</dbReference>
<dbReference type="InterPro" id="IPR036853">
    <property type="entry name" value="Ribosomal_uL14_sf"/>
</dbReference>
<dbReference type="NCBIfam" id="TIGR01067">
    <property type="entry name" value="rplN_bact"/>
    <property type="match status" value="1"/>
</dbReference>
<dbReference type="PANTHER" id="PTHR11761">
    <property type="entry name" value="50S/60S RIBOSOMAL PROTEIN L14/L23"/>
    <property type="match status" value="1"/>
</dbReference>
<dbReference type="PANTHER" id="PTHR11761:SF3">
    <property type="entry name" value="LARGE RIBOSOMAL SUBUNIT PROTEIN UL14M"/>
    <property type="match status" value="1"/>
</dbReference>
<dbReference type="Pfam" id="PF00238">
    <property type="entry name" value="Ribosomal_L14"/>
    <property type="match status" value="1"/>
</dbReference>
<dbReference type="SMART" id="SM01374">
    <property type="entry name" value="Ribosomal_L14"/>
    <property type="match status" value="1"/>
</dbReference>
<dbReference type="SUPFAM" id="SSF50193">
    <property type="entry name" value="Ribosomal protein L14"/>
    <property type="match status" value="1"/>
</dbReference>
<dbReference type="PROSITE" id="PS00049">
    <property type="entry name" value="RIBOSOMAL_L14"/>
    <property type="match status" value="1"/>
</dbReference>
<organism>
    <name type="scientific">Orientia tsutsugamushi (strain Ikeda)</name>
    <name type="common">Rickettsia tsutsugamushi</name>
    <dbReference type="NCBI Taxonomy" id="334380"/>
    <lineage>
        <taxon>Bacteria</taxon>
        <taxon>Pseudomonadati</taxon>
        <taxon>Pseudomonadota</taxon>
        <taxon>Alphaproteobacteria</taxon>
        <taxon>Rickettsiales</taxon>
        <taxon>Rickettsiaceae</taxon>
        <taxon>Rickettsieae</taxon>
        <taxon>Orientia</taxon>
    </lineage>
</organism>
<reference key="1">
    <citation type="journal article" date="2008" name="DNA Res.">
        <title>The whole-genome sequencing of the obligate intracellular bacterium Orientia tsutsugamushi revealed massive gene amplification during reductive genome evolution.</title>
        <authorList>
            <person name="Nakayama K."/>
            <person name="Yamashita A."/>
            <person name="Kurokawa K."/>
            <person name="Morimoto T."/>
            <person name="Ogawa M."/>
            <person name="Fukuhara M."/>
            <person name="Urakami H."/>
            <person name="Ohnishi M."/>
            <person name="Uchiyama I."/>
            <person name="Ogura Y."/>
            <person name="Ooka T."/>
            <person name="Oshima K."/>
            <person name="Tamura A."/>
            <person name="Hattori M."/>
            <person name="Hayashi T."/>
        </authorList>
    </citation>
    <scope>NUCLEOTIDE SEQUENCE [LARGE SCALE GENOMIC DNA]</scope>
    <source>
        <strain>Ikeda</strain>
    </source>
</reference>
<name>RL14_ORITI</name>
<keyword id="KW-0687">Ribonucleoprotein</keyword>
<keyword id="KW-0689">Ribosomal protein</keyword>
<keyword id="KW-0694">RNA-binding</keyword>
<keyword id="KW-0699">rRNA-binding</keyword>
<feature type="chain" id="PRO_0000355831" description="Large ribosomal subunit protein uL14">
    <location>
        <begin position="1"/>
        <end position="122"/>
    </location>
</feature>
<gene>
    <name evidence="1" type="primary">rplN</name>
    <name type="ordered locus">OTT_1054</name>
</gene>
<comment type="function">
    <text evidence="1">Binds to 23S rRNA. Forms part of two intersubunit bridges in the 70S ribosome.</text>
</comment>
<comment type="subunit">
    <text evidence="1">Part of the 50S ribosomal subunit. Forms a cluster with proteins L3 and L19. In the 70S ribosome, L14 and L19 interact and together make contacts with the 16S rRNA in bridges B5 and B8.</text>
</comment>
<comment type="similarity">
    <text evidence="1">Belongs to the universal ribosomal protein uL14 family.</text>
</comment>
<accession>B3CT15</accession>
<proteinExistence type="inferred from homology"/>
<protein>
    <recommendedName>
        <fullName evidence="1">Large ribosomal subunit protein uL14</fullName>
    </recommendedName>
    <alternativeName>
        <fullName evidence="2">50S ribosomal protein L14</fullName>
    </alternativeName>
</protein>
<evidence type="ECO:0000255" key="1">
    <source>
        <dbReference type="HAMAP-Rule" id="MF_01367"/>
    </source>
</evidence>
<evidence type="ECO:0000305" key="2"/>